<accession>Q53222</accession>
<accession>Q3J177</accession>
<protein>
    <recommendedName>
        <fullName>2-vinyl bacteriochlorophyllide hydratase</fullName>
        <ecNumber>4.2.1.-</ecNumber>
    </recommendedName>
</protein>
<sequence>MQPTSPAAPHRRLYTEEQRARRDATRWTLVQGILAPLQFLVFAISLGLVLWYLATGEGYAAATASILIKTFLLYTIMVTGAIWEKVVFGQYLFAPAFFWEDVFSFGVIALHTAYLWALFTGQPHGLQMGIALAAYATYVINAGQFLWKLRMARLDMEAAQ</sequence>
<reference key="1">
    <citation type="journal article" date="1999" name="Photosyn. Res.">
        <title>The photosynthesis gene cluster of Rhodobacter sphaeroides.</title>
        <authorList>
            <person name="Naylor G.W."/>
            <person name="Addlesee H.A."/>
            <person name="Gibson L.C.D."/>
            <person name="Hunter C.N."/>
        </authorList>
    </citation>
    <scope>NUCLEOTIDE SEQUENCE [GENOMIC DNA]</scope>
</reference>
<reference key="2">
    <citation type="journal article" date="2000" name="Nucleic Acids Res.">
        <title>DNA sequence analysis of the photosynthesis region of Rhodobacter sphaeroides 2.4.1.</title>
        <authorList>
            <person name="Choudhary M."/>
            <person name="Kaplan S."/>
        </authorList>
    </citation>
    <scope>NUCLEOTIDE SEQUENCE [GENOMIC DNA]</scope>
</reference>
<reference key="3">
    <citation type="submission" date="2005-09" db="EMBL/GenBank/DDBJ databases">
        <title>Complete sequence of chromosome 1 of Rhodobacter sphaeroides 2.4.1.</title>
        <authorList>
            <person name="Copeland A."/>
            <person name="Lucas S."/>
            <person name="Lapidus A."/>
            <person name="Barry K."/>
            <person name="Detter J.C."/>
            <person name="Glavina T."/>
            <person name="Hammon N."/>
            <person name="Israni S."/>
            <person name="Pitluck S."/>
            <person name="Richardson P."/>
            <person name="Mackenzie C."/>
            <person name="Choudhary M."/>
            <person name="Larimer F."/>
            <person name="Hauser L.J."/>
            <person name="Land M."/>
            <person name="Donohue T.J."/>
            <person name="Kaplan S."/>
        </authorList>
    </citation>
    <scope>NUCLEOTIDE SEQUENCE [LARGE SCALE GENOMIC DNA]</scope>
    <source>
        <strain>ATCC 17023 / DSM 158 / JCM 6121 / CCUG 31486 / LMG 2827 / NBRC 12203 / NCIMB 8253 / ATH 2.4.1.</strain>
    </source>
</reference>
<reference key="4">
    <citation type="journal article" date="1995" name="J. Bacteriol.">
        <title>Genetic evidence that PpsR from Rhodobacter sphaeroides 2.4.1 functions as a repressor of puc and bchF expression.</title>
        <authorList>
            <person name="Gomelsky M."/>
            <person name="Kaplan S."/>
        </authorList>
    </citation>
    <scope>NUCLEOTIDE SEQUENCE [GENOMIC DNA] OF 1-43</scope>
</reference>
<organism>
    <name type="scientific">Cereibacter sphaeroides (strain ATCC 17023 / DSM 158 / JCM 6121 / CCUG 31486 / LMG 2827 / NBRC 12203 / NCIMB 8253 / ATH 2.4.1.)</name>
    <name type="common">Rhodobacter sphaeroides</name>
    <dbReference type="NCBI Taxonomy" id="272943"/>
    <lineage>
        <taxon>Bacteria</taxon>
        <taxon>Pseudomonadati</taxon>
        <taxon>Pseudomonadota</taxon>
        <taxon>Alphaproteobacteria</taxon>
        <taxon>Rhodobacterales</taxon>
        <taxon>Paracoccaceae</taxon>
        <taxon>Cereibacter</taxon>
    </lineage>
</organism>
<comment type="pathway">
    <text>Porphyrin-containing compound metabolism; bacteriochlorophyll biosynthesis (light-independent).</text>
</comment>
<keyword id="KW-0077">Bacteriochlorophyll biosynthesis</keyword>
<keyword id="KW-0149">Chlorophyll biosynthesis</keyword>
<keyword id="KW-0456">Lyase</keyword>
<keyword id="KW-0602">Photosynthesis</keyword>
<keyword id="KW-1185">Reference proteome</keyword>
<feature type="chain" id="PRO_0000064877" description="2-vinyl bacteriochlorophyllide hydratase">
    <location>
        <begin position="1"/>
        <end position="160"/>
    </location>
</feature>
<dbReference type="EC" id="4.2.1.-"/>
<dbReference type="EMBL" id="AJ010302">
    <property type="protein sequence ID" value="CAB38726.1"/>
    <property type="molecule type" value="Genomic_DNA"/>
</dbReference>
<dbReference type="EMBL" id="AF195122">
    <property type="protein sequence ID" value="AAF24276.1"/>
    <property type="molecule type" value="Genomic_DNA"/>
</dbReference>
<dbReference type="EMBL" id="CP000143">
    <property type="protein sequence ID" value="ABA79457.1"/>
    <property type="molecule type" value="Genomic_DNA"/>
</dbReference>
<dbReference type="EMBL" id="L37197">
    <property type="protein sequence ID" value="AAA51373.1"/>
    <property type="molecule type" value="Genomic_DNA"/>
</dbReference>
<dbReference type="PIR" id="T50732">
    <property type="entry name" value="T50732"/>
</dbReference>
<dbReference type="RefSeq" id="WP_009565673.1">
    <property type="nucleotide sequence ID" value="NZ_CP030271.1"/>
</dbReference>
<dbReference type="RefSeq" id="YP_353358.1">
    <property type="nucleotide sequence ID" value="NC_007493.2"/>
</dbReference>
<dbReference type="STRING" id="272943.RSP_0284"/>
<dbReference type="EnsemblBacteria" id="ABA79457">
    <property type="protein sequence ID" value="ABA79457"/>
    <property type="gene ID" value="RSP_0284"/>
</dbReference>
<dbReference type="GeneID" id="67447017"/>
<dbReference type="KEGG" id="rsp:RSP_0284"/>
<dbReference type="PATRIC" id="fig|272943.9.peg.2228"/>
<dbReference type="eggNOG" id="ENOG502ZS4D">
    <property type="taxonomic scope" value="Bacteria"/>
</dbReference>
<dbReference type="OrthoDB" id="8562352at2"/>
<dbReference type="PhylomeDB" id="Q53222"/>
<dbReference type="BRENDA" id="4.2.1.165">
    <property type="organism ID" value="5383"/>
</dbReference>
<dbReference type="UniPathway" id="UPA00671"/>
<dbReference type="Proteomes" id="UP000002703">
    <property type="component" value="Chromosome 1"/>
</dbReference>
<dbReference type="GO" id="GO:0016836">
    <property type="term" value="F:hydro-lyase activity"/>
    <property type="evidence" value="ECO:0007669"/>
    <property type="project" value="InterPro"/>
</dbReference>
<dbReference type="GO" id="GO:0036070">
    <property type="term" value="P:light-independent bacteriochlorophyll biosynthetic process"/>
    <property type="evidence" value="ECO:0007669"/>
    <property type="project" value="UniProtKB-UniPathway"/>
</dbReference>
<dbReference type="GO" id="GO:0019685">
    <property type="term" value="P:photosynthesis, dark reaction"/>
    <property type="evidence" value="ECO:0007669"/>
    <property type="project" value="InterPro"/>
</dbReference>
<dbReference type="InterPro" id="IPR009905">
    <property type="entry name" value="BCHF"/>
</dbReference>
<dbReference type="NCBIfam" id="TIGR02020">
    <property type="entry name" value="BchF"/>
    <property type="match status" value="1"/>
</dbReference>
<dbReference type="Pfam" id="PF07284">
    <property type="entry name" value="BCHF"/>
    <property type="match status" value="1"/>
</dbReference>
<proteinExistence type="predicted"/>
<gene>
    <name type="primary">bchF</name>
    <name type="ordered locus">RHOS4_18890</name>
    <name type="ORF">RSP_0284</name>
</gene>
<name>BCHF_CERS4</name>